<proteinExistence type="inferred from homology"/>
<comment type="function">
    <text evidence="1">Acts as a chaperone.</text>
</comment>
<comment type="induction">
    <text evidence="1">By stress conditions e.g. heat shock.</text>
</comment>
<comment type="similarity">
    <text evidence="1">Belongs to the heat shock protein 70 family.</text>
</comment>
<name>DNAK_WIGBR</name>
<keyword id="KW-0067">ATP-binding</keyword>
<keyword id="KW-0143">Chaperone</keyword>
<keyword id="KW-0547">Nucleotide-binding</keyword>
<keyword id="KW-0597">Phosphoprotein</keyword>
<keyword id="KW-1185">Reference proteome</keyword>
<keyword id="KW-0346">Stress response</keyword>
<gene>
    <name evidence="1" type="primary">dnaK</name>
    <name type="ordered locus">WIGBR2990</name>
</gene>
<accession>Q8D2Q5</accession>
<sequence>MEILMGNIIGIDLGTTNSCVAIIENGKVKVIENSEGDRTTPSIIAYTEENEILVGQPAKRQSVTNPKNTFFAIKRLIGRKFTDHEVQRDVNIMPYKIVSSENGDVWLNVKNQKVAPPQISAEILKKMKKTAEDYIGKSITEAVITVPAYFNDTQRQATKDAGKIAGLDVKRIINEPTAAALAYGLDKKTGNRIIAVYDLGGGTFDISIIEIDDVDGEKTFEVLSTNGDTHLGGEDFDSRLINYLVNEFKKEQGIDLRNDPLAMQRLKESSEKAKIELSSVHQTDVNLPYITADSSGPKHMNIKVTRAKLESLVEELIYKTLEPVKTSLKDAKLKIIDIKDVILVGGQTRMPLVQKKVSDFFGKEPRKDVNPDEAVAIGAAVQGGVLAGDVKDVLLLDVTPLSLGIETMGGVMTTLISKNTTIPTKHSQIFSTAEDNQSAVTIHVLQGERKRSIDNKSLGQFNLDGIAPAMRGMPQIEVTFDIDADGILHVSAKDKNSGREQKITIKASSGLSENEIDKMLKESEANAELDIKFEELVKTKNQADHLLHSTRKQIKEAKNLPLEKKTEIEKCINELELSIKGEDKKDIEIKIQSLIQISSCLVDFSKNKENLNKEDIIKTNKKENNNKTNDDVVDAEFEEIKDKKN</sequence>
<protein>
    <recommendedName>
        <fullName evidence="1">Chaperone protein DnaK</fullName>
    </recommendedName>
    <alternativeName>
        <fullName evidence="1">HSP70</fullName>
    </alternativeName>
    <alternativeName>
        <fullName evidence="1">Heat shock 70 kDa protein</fullName>
    </alternativeName>
    <alternativeName>
        <fullName evidence="1">Heat shock protein 70</fullName>
    </alternativeName>
</protein>
<feature type="chain" id="PRO_0000078587" description="Chaperone protein DnaK">
    <location>
        <begin position="1"/>
        <end position="645"/>
    </location>
</feature>
<feature type="modified residue" description="Phosphothreonine; by autocatalysis" evidence="1">
    <location>
        <position position="203"/>
    </location>
</feature>
<organism>
    <name type="scientific">Wigglesworthia glossinidia brevipalpis</name>
    <dbReference type="NCBI Taxonomy" id="36870"/>
    <lineage>
        <taxon>Bacteria</taxon>
        <taxon>Pseudomonadati</taxon>
        <taxon>Pseudomonadota</taxon>
        <taxon>Gammaproteobacteria</taxon>
        <taxon>Enterobacterales</taxon>
        <taxon>Erwiniaceae</taxon>
        <taxon>Wigglesworthia</taxon>
    </lineage>
</organism>
<evidence type="ECO:0000255" key="1">
    <source>
        <dbReference type="HAMAP-Rule" id="MF_00332"/>
    </source>
</evidence>
<dbReference type="EMBL" id="BA000021">
    <property type="protein sequence ID" value="BAC24445.1"/>
    <property type="molecule type" value="Genomic_DNA"/>
</dbReference>
<dbReference type="SMR" id="Q8D2Q5"/>
<dbReference type="STRING" id="36870.gene:10368792"/>
<dbReference type="KEGG" id="wbr:dnaK"/>
<dbReference type="eggNOG" id="COG0443">
    <property type="taxonomic scope" value="Bacteria"/>
</dbReference>
<dbReference type="HOGENOM" id="CLU_005965_2_1_6"/>
<dbReference type="Proteomes" id="UP000000562">
    <property type="component" value="Chromosome"/>
</dbReference>
<dbReference type="GO" id="GO:0005524">
    <property type="term" value="F:ATP binding"/>
    <property type="evidence" value="ECO:0007669"/>
    <property type="project" value="UniProtKB-UniRule"/>
</dbReference>
<dbReference type="GO" id="GO:0140662">
    <property type="term" value="F:ATP-dependent protein folding chaperone"/>
    <property type="evidence" value="ECO:0007669"/>
    <property type="project" value="InterPro"/>
</dbReference>
<dbReference type="GO" id="GO:0051082">
    <property type="term" value="F:unfolded protein binding"/>
    <property type="evidence" value="ECO:0007669"/>
    <property type="project" value="InterPro"/>
</dbReference>
<dbReference type="CDD" id="cd10234">
    <property type="entry name" value="ASKHA_NBD_HSP70_DnaK-like"/>
    <property type="match status" value="1"/>
</dbReference>
<dbReference type="FunFam" id="2.60.34.10:FF:000014">
    <property type="entry name" value="Chaperone protein DnaK HSP70"/>
    <property type="match status" value="1"/>
</dbReference>
<dbReference type="FunFam" id="1.20.1270.10:FF:000001">
    <property type="entry name" value="Molecular chaperone DnaK"/>
    <property type="match status" value="1"/>
</dbReference>
<dbReference type="FunFam" id="3.30.420.40:FF:000004">
    <property type="entry name" value="Molecular chaperone DnaK"/>
    <property type="match status" value="1"/>
</dbReference>
<dbReference type="FunFam" id="3.90.640.10:FF:000003">
    <property type="entry name" value="Molecular chaperone DnaK"/>
    <property type="match status" value="1"/>
</dbReference>
<dbReference type="Gene3D" id="1.20.1270.10">
    <property type="match status" value="1"/>
</dbReference>
<dbReference type="Gene3D" id="3.30.420.40">
    <property type="match status" value="2"/>
</dbReference>
<dbReference type="Gene3D" id="3.90.640.10">
    <property type="entry name" value="Actin, Chain A, domain 4"/>
    <property type="match status" value="1"/>
</dbReference>
<dbReference type="Gene3D" id="2.60.34.10">
    <property type="entry name" value="Substrate Binding Domain Of DNAk, Chain A, domain 1"/>
    <property type="match status" value="1"/>
</dbReference>
<dbReference type="HAMAP" id="MF_00332">
    <property type="entry name" value="DnaK"/>
    <property type="match status" value="1"/>
</dbReference>
<dbReference type="InterPro" id="IPR043129">
    <property type="entry name" value="ATPase_NBD"/>
</dbReference>
<dbReference type="InterPro" id="IPR012725">
    <property type="entry name" value="Chaperone_DnaK"/>
</dbReference>
<dbReference type="InterPro" id="IPR018181">
    <property type="entry name" value="Heat_shock_70_CS"/>
</dbReference>
<dbReference type="InterPro" id="IPR029048">
    <property type="entry name" value="HSP70_C_sf"/>
</dbReference>
<dbReference type="InterPro" id="IPR029047">
    <property type="entry name" value="HSP70_peptide-bd_sf"/>
</dbReference>
<dbReference type="InterPro" id="IPR013126">
    <property type="entry name" value="Hsp_70_fam"/>
</dbReference>
<dbReference type="NCBIfam" id="NF001413">
    <property type="entry name" value="PRK00290.1"/>
    <property type="match status" value="1"/>
</dbReference>
<dbReference type="NCBIfam" id="NF003520">
    <property type="entry name" value="PRK05183.1"/>
    <property type="match status" value="1"/>
</dbReference>
<dbReference type="NCBIfam" id="TIGR02350">
    <property type="entry name" value="prok_dnaK"/>
    <property type="match status" value="1"/>
</dbReference>
<dbReference type="PANTHER" id="PTHR19375">
    <property type="entry name" value="HEAT SHOCK PROTEIN 70KDA"/>
    <property type="match status" value="1"/>
</dbReference>
<dbReference type="Pfam" id="PF00012">
    <property type="entry name" value="HSP70"/>
    <property type="match status" value="1"/>
</dbReference>
<dbReference type="PRINTS" id="PR00301">
    <property type="entry name" value="HEATSHOCK70"/>
</dbReference>
<dbReference type="SUPFAM" id="SSF53067">
    <property type="entry name" value="Actin-like ATPase domain"/>
    <property type="match status" value="2"/>
</dbReference>
<dbReference type="SUPFAM" id="SSF100920">
    <property type="entry name" value="Heat shock protein 70kD (HSP70), peptide-binding domain"/>
    <property type="match status" value="1"/>
</dbReference>
<dbReference type="PROSITE" id="PS00297">
    <property type="entry name" value="HSP70_1"/>
    <property type="match status" value="1"/>
</dbReference>
<dbReference type="PROSITE" id="PS00329">
    <property type="entry name" value="HSP70_2"/>
    <property type="match status" value="1"/>
</dbReference>
<dbReference type="PROSITE" id="PS01036">
    <property type="entry name" value="HSP70_3"/>
    <property type="match status" value="1"/>
</dbReference>
<reference key="1">
    <citation type="journal article" date="2002" name="Nat. Genet.">
        <title>Genome sequence of the endocellular obligate symbiont of tsetse flies, Wigglesworthia glossinidia.</title>
        <authorList>
            <person name="Akman L."/>
            <person name="Yamashita A."/>
            <person name="Watanabe H."/>
            <person name="Oshima K."/>
            <person name="Shiba T."/>
            <person name="Hattori M."/>
            <person name="Aksoy S."/>
        </authorList>
    </citation>
    <scope>NUCLEOTIDE SEQUENCE [LARGE SCALE GENOMIC DNA]</scope>
</reference>